<sequence>MVPSQRLSRTSSISSNEDPAESHILELEAVSDTNTDCDMDPMEGSEEHSTDGEISSSEEEDEDPTPAHTIPARPSSVVITPTSASFVIPRKKWDLQDKTVTLHRSPLCRDEDEKEETGNSSYTRGHKRRRGEVHGCTDESYGKRRHLPPGARAPRAPRAPRVPRAPRSPRAPRSNRATRGPRSESRGAGRSTRKQARQERSQRPLPNKPWFDMSLVKPVSKITFVTLPSPLASLTLEPIQDPFLQSMLAVAAHPEIGAWQKVQPRHELRRSYKTLREFFTKSTNKDTWLDARMQAIQNAGLCTLVAMLEETIFWLQEITYHGDLPLAPAEDILLACAMSLSKVILTKLKELAPCFLPNTRDYNFVKQLFYITCATARQNKVVETLSSSYVKQPLCLLAAYAAVAPAYINANCRRRHDEVEFLGHYIKNYNPGTLSSLLTEAVETHTRDCRSASCSRLVRAILSPGTGSLGLFFVPGLNQ</sequence>
<accession>Q1HVH2</accession>
<keyword id="KW-0244">Early protein</keyword>
<keyword id="KW-1035">Host cytoplasm</keyword>
<keyword id="KW-1048">Host nucleus</keyword>
<keyword id="KW-0945">Host-virus interaction</keyword>
<keyword id="KW-1090">Inhibition of host innate immune response by virus</keyword>
<keyword id="KW-1114">Inhibition of host interferon signaling pathway by virus</keyword>
<keyword id="KW-1102">Inhibition of host PKR by virus</keyword>
<keyword id="KW-0922">Interferon antiviral system evasion</keyword>
<keyword id="KW-0479">Metal-binding</keyword>
<keyword id="KW-0509">mRNA transport</keyword>
<keyword id="KW-0597">Phosphoprotein</keyword>
<keyword id="KW-1185">Reference proteome</keyword>
<keyword id="KW-0694">RNA-binding</keyword>
<keyword id="KW-0804">Transcription</keyword>
<keyword id="KW-0805">Transcription regulation</keyword>
<keyword id="KW-0813">Transport</keyword>
<keyword id="KW-0899">Viral immunoevasion</keyword>
<keyword id="KW-0862">Zinc</keyword>
<keyword id="KW-0863">Zinc-finger</keyword>
<proteinExistence type="inferred from homology"/>
<evidence type="ECO:0000250" key="1"/>
<evidence type="ECO:0000250" key="2">
    <source>
        <dbReference type="UniProtKB" id="P10238"/>
    </source>
</evidence>
<evidence type="ECO:0000250" key="3">
    <source>
        <dbReference type="UniProtKB" id="Q04360"/>
    </source>
</evidence>
<evidence type="ECO:0000256" key="4">
    <source>
        <dbReference type="SAM" id="MobiDB-lite"/>
    </source>
</evidence>
<evidence type="ECO:0000305" key="5"/>
<feature type="chain" id="PRO_0000375953" description="mRNA export factor ICP27 homolog">
    <location>
        <begin position="1"/>
        <end position="479"/>
    </location>
</feature>
<feature type="zinc finger region" description="CHC2-type" evidence="2">
    <location>
        <begin position="354"/>
        <end position="454"/>
    </location>
</feature>
<feature type="region of interest" description="Disordered" evidence="4">
    <location>
        <begin position="1"/>
        <end position="77"/>
    </location>
</feature>
<feature type="region of interest" description="Disordered" evidence="4">
    <location>
        <begin position="91"/>
        <end position="210"/>
    </location>
</feature>
<feature type="compositionally biased region" description="Low complexity" evidence="4">
    <location>
        <begin position="1"/>
        <end position="15"/>
    </location>
</feature>
<feature type="compositionally biased region" description="Acidic residues" evidence="4">
    <location>
        <begin position="35"/>
        <end position="44"/>
    </location>
</feature>
<feature type="compositionally biased region" description="Basic and acidic residues" evidence="4">
    <location>
        <begin position="132"/>
        <end position="142"/>
    </location>
</feature>
<feature type="binding site" evidence="2">
    <location>
        <position position="354"/>
    </location>
    <ligand>
        <name>Zn(2+)</name>
        <dbReference type="ChEBI" id="CHEBI:29105"/>
    </ligand>
</feature>
<feature type="binding site" evidence="2">
    <location>
        <position position="445"/>
    </location>
    <ligand>
        <name>Zn(2+)</name>
        <dbReference type="ChEBI" id="CHEBI:29105"/>
    </ligand>
</feature>
<feature type="binding site" evidence="2">
    <location>
        <position position="449"/>
    </location>
    <ligand>
        <name>Zn(2+)</name>
        <dbReference type="ChEBI" id="CHEBI:29105"/>
    </ligand>
</feature>
<feature type="binding site" evidence="2">
    <location>
        <position position="454"/>
    </location>
    <ligand>
        <name>Zn(2+)</name>
        <dbReference type="ChEBI" id="CHEBI:29105"/>
    </ligand>
</feature>
<protein>
    <recommendedName>
        <fullName>mRNA export factor ICP27 homolog</fullName>
    </recommendedName>
    <alternativeName>
        <fullName>Mta</fullName>
    </alternativeName>
    <alternativeName>
        <fullName>ORF57 protein homolog</fullName>
    </alternativeName>
    <alternativeName>
        <fullName evidence="3">Protein EB2</fullName>
    </alternativeName>
    <alternativeName>
        <fullName>Protein SM</fullName>
    </alternativeName>
</protein>
<comment type="function">
    <text evidence="3">Promotes the nuclear export of a subset of early and late viral mRNAs by interacting with mRNAs and cellular export proteins. Additionally may prevent the establishment of cellular antiviral state, by acting as an alternative splicing factor for cellular RNAs such as STAT1, resulting in a STAT1 mRNA incapable of producing the STAT1alpha isoform.</text>
</comment>
<comment type="subunit">
    <text evidence="3">Interacts with host XPO1 and with the XPO1 export pathway components small GTPase RAN and nucleoporin NUP214. Interacts with host SPEN, OTT1 and OTT3. Interacts with host SRSF1, SRSF3, SRSF7 and SRPK1. Interacts with host DHX9; this interaction may have an inhibitory effect on virion production. Interacts (via N-terminus) with host NXF1; this interaction plays a role in mRNA export.</text>
</comment>
<comment type="subcellular location">
    <subcellularLocation>
        <location evidence="3">Host nucleus</location>
    </subcellularLocation>
    <subcellularLocation>
        <location evidence="3">Host cytoplasm</location>
    </subcellularLocation>
    <text evidence="3">shuttles between the nucleus and the cytoplasm.</text>
</comment>
<comment type="domain">
    <text evidence="1">Binds viral intronless RNAs.</text>
</comment>
<comment type="PTM">
    <text evidence="3">Phosphorylated by cellular protein kinase CK2.</text>
</comment>
<comment type="similarity">
    <text evidence="5">Belongs to the HHV-1 ICP27 protein family.</text>
</comment>
<dbReference type="EMBL" id="DQ279927">
    <property type="protein sequence ID" value="ABB89236.1"/>
    <property type="molecule type" value="Genomic_DNA"/>
</dbReference>
<dbReference type="RefSeq" id="YP_001129456.1">
    <property type="nucleotide sequence ID" value="NC_009334.1"/>
</dbReference>
<dbReference type="SMR" id="Q1HVH2"/>
<dbReference type="KEGG" id="vg:5176227"/>
<dbReference type="Proteomes" id="UP000007639">
    <property type="component" value="Genome"/>
</dbReference>
<dbReference type="GO" id="GO:0030430">
    <property type="term" value="C:host cell cytoplasm"/>
    <property type="evidence" value="ECO:0007669"/>
    <property type="project" value="UniProtKB-SubCell"/>
</dbReference>
<dbReference type="GO" id="GO:0042025">
    <property type="term" value="C:host cell nucleus"/>
    <property type="evidence" value="ECO:0007669"/>
    <property type="project" value="UniProtKB-SubCell"/>
</dbReference>
<dbReference type="GO" id="GO:0030291">
    <property type="term" value="F:protein serine/threonine kinase inhibitor activity"/>
    <property type="evidence" value="ECO:0007669"/>
    <property type="project" value="UniProtKB-KW"/>
</dbReference>
<dbReference type="GO" id="GO:0003723">
    <property type="term" value="F:RNA binding"/>
    <property type="evidence" value="ECO:0007669"/>
    <property type="project" value="UniProtKB-KW"/>
</dbReference>
<dbReference type="GO" id="GO:0008270">
    <property type="term" value="F:zinc ion binding"/>
    <property type="evidence" value="ECO:0007669"/>
    <property type="project" value="UniProtKB-KW"/>
</dbReference>
<dbReference type="GO" id="GO:0051028">
    <property type="term" value="P:mRNA transport"/>
    <property type="evidence" value="ECO:0007669"/>
    <property type="project" value="UniProtKB-KW"/>
</dbReference>
<dbReference type="GO" id="GO:0006355">
    <property type="term" value="P:regulation of DNA-templated transcription"/>
    <property type="evidence" value="ECO:0007669"/>
    <property type="project" value="InterPro"/>
</dbReference>
<dbReference type="GO" id="GO:0052170">
    <property type="term" value="P:symbiont-mediated suppression of host innate immune response"/>
    <property type="evidence" value="ECO:0007669"/>
    <property type="project" value="UniProtKB-KW"/>
</dbReference>
<dbReference type="GO" id="GO:0039580">
    <property type="term" value="P:symbiont-mediated suppression of host PKR/eIFalpha signaling"/>
    <property type="evidence" value="ECO:0007669"/>
    <property type="project" value="UniProtKB-KW"/>
</dbReference>
<dbReference type="GO" id="GO:0039502">
    <property type="term" value="P:symbiont-mediated suppression of host type I interferon-mediated signaling pathway"/>
    <property type="evidence" value="ECO:0007669"/>
    <property type="project" value="UniProtKB-KW"/>
</dbReference>
<dbReference type="InterPro" id="IPR008648">
    <property type="entry name" value="ICP27-like"/>
</dbReference>
<dbReference type="Pfam" id="PF05459">
    <property type="entry name" value="Herpes_UL69"/>
    <property type="match status" value="1"/>
</dbReference>
<name>ICP27_EBVA8</name>
<reference key="1">
    <citation type="journal article" date="2006" name="Virology">
        <title>The genome of Epstein-Barr virus type 2 strain AG876.</title>
        <authorList>
            <person name="Dolan A."/>
            <person name="Addison C."/>
            <person name="Gatherer D."/>
            <person name="Davison A.J."/>
            <person name="McGeoch D.J."/>
        </authorList>
    </citation>
    <scope>NUCLEOTIDE SEQUENCE [LARGE SCALE GENOMIC DNA]</scope>
</reference>
<gene>
    <name type="ORF">BMLF1</name>
</gene>
<gene>
    <name type="ORF">BSLF2</name>
</gene>
<organismHost>
    <name type="scientific">Homo sapiens</name>
    <name type="common">Human</name>
    <dbReference type="NCBI Taxonomy" id="9606"/>
</organismHost>
<organism>
    <name type="scientific">Epstein-Barr virus (strain AG876)</name>
    <name type="common">HHV-4</name>
    <name type="synonym">Human herpesvirus 4</name>
    <dbReference type="NCBI Taxonomy" id="82830"/>
    <lineage>
        <taxon>Viruses</taxon>
        <taxon>Duplodnaviria</taxon>
        <taxon>Heunggongvirae</taxon>
        <taxon>Peploviricota</taxon>
        <taxon>Herviviricetes</taxon>
        <taxon>Herpesvirales</taxon>
        <taxon>Orthoherpesviridae</taxon>
        <taxon>Gammaherpesvirinae</taxon>
        <taxon>Lymphocryptovirus</taxon>
        <taxon>Lymphocryptovirus humangamma4</taxon>
        <taxon>Epstein-Barr virus (strain GD1)</taxon>
    </lineage>
</organism>